<reference key="1">
    <citation type="journal article" date="2001" name="Virology">
        <title>Analysis of the first complete DNA sequence of an invertebrate iridovirus: coding strategy of the genome of Chilo iridescent virus.</title>
        <authorList>
            <person name="Jakob N.J."/>
            <person name="Mueller K."/>
            <person name="Bahr U."/>
            <person name="Darai G."/>
        </authorList>
    </citation>
    <scope>NUCLEOTIDE SEQUENCE [LARGE SCALE GENOMIC DNA]</scope>
</reference>
<reference key="2">
    <citation type="journal article" date="2007" name="Virol. J.">
        <title>Comparative genomic analysis of the family Iridoviridae: re-annotating and defining the core set of iridovirus genes.</title>
        <authorList>
            <person name="Eaton H.E."/>
            <person name="Metcalf J."/>
            <person name="Penny E."/>
            <person name="Tcherepanov V."/>
            <person name="Upton C."/>
            <person name="Brunetti C.R."/>
        </authorList>
    </citation>
    <scope>GENOME REANNOTATION</scope>
</reference>
<comment type="function">
    <text evidence="1">FAD-dependent sulfhydryl oxidase that catalyzes disulfide bond formation.</text>
</comment>
<comment type="catalytic activity">
    <reaction>
        <text>2 R'C(R)SH + O2 = R'C(R)S-S(R)CR' + H2O2</text>
        <dbReference type="Rhea" id="RHEA:17357"/>
        <dbReference type="ChEBI" id="CHEBI:15379"/>
        <dbReference type="ChEBI" id="CHEBI:16240"/>
        <dbReference type="ChEBI" id="CHEBI:16520"/>
        <dbReference type="ChEBI" id="CHEBI:17412"/>
        <dbReference type="EC" id="1.8.3.2"/>
    </reaction>
</comment>
<comment type="cofactor">
    <cofactor evidence="1">
        <name>FAD</name>
        <dbReference type="ChEBI" id="CHEBI:57692"/>
    </cofactor>
</comment>
<comment type="similarity">
    <text evidence="2">Belongs to the IIV-6 347L family.</text>
</comment>
<evidence type="ECO:0000255" key="1">
    <source>
        <dbReference type="PROSITE-ProRule" id="PRU00654"/>
    </source>
</evidence>
<evidence type="ECO:0000305" key="2"/>
<accession>Q91FH7</accession>
<dbReference type="EC" id="1.8.3.2"/>
<dbReference type="EMBL" id="AF303741">
    <property type="protein sequence ID" value="AAK82208.1"/>
    <property type="molecule type" value="Genomic_DNA"/>
</dbReference>
<dbReference type="RefSeq" id="NP_149810.1">
    <property type="nucleotide sequence ID" value="NC_003038.1"/>
</dbReference>
<dbReference type="SMR" id="Q91FH7"/>
<dbReference type="KEGG" id="vg:1732986"/>
<dbReference type="OrthoDB" id="14873at10239"/>
<dbReference type="Proteomes" id="UP000001359">
    <property type="component" value="Genome"/>
</dbReference>
<dbReference type="GO" id="GO:0050660">
    <property type="term" value="F:flavin adenine dinucleotide binding"/>
    <property type="evidence" value="ECO:0007669"/>
    <property type="project" value="TreeGrafter"/>
</dbReference>
<dbReference type="GO" id="GO:0016971">
    <property type="term" value="F:flavin-dependent sulfhydryl oxidase activity"/>
    <property type="evidence" value="ECO:0007669"/>
    <property type="project" value="InterPro"/>
</dbReference>
<dbReference type="Gene3D" id="1.20.120.310">
    <property type="entry name" value="ERV/ALR sulfhydryl oxidase domain"/>
    <property type="match status" value="1"/>
</dbReference>
<dbReference type="InterPro" id="IPR039799">
    <property type="entry name" value="ALR/ERV"/>
</dbReference>
<dbReference type="InterPro" id="IPR036774">
    <property type="entry name" value="ERV/ALR_sulphydryl_oxid_sf"/>
</dbReference>
<dbReference type="InterPro" id="IPR017905">
    <property type="entry name" value="ERV/ALR_sulphydryl_oxidase"/>
</dbReference>
<dbReference type="PANTHER" id="PTHR12645">
    <property type="entry name" value="ALR/ERV"/>
    <property type="match status" value="1"/>
</dbReference>
<dbReference type="PANTHER" id="PTHR12645:SF0">
    <property type="entry name" value="FAD-LINKED SULFHYDRYL OXIDASE ALR"/>
    <property type="match status" value="1"/>
</dbReference>
<dbReference type="Pfam" id="PF04777">
    <property type="entry name" value="Evr1_Alr"/>
    <property type="match status" value="1"/>
</dbReference>
<dbReference type="SUPFAM" id="SSF69000">
    <property type="entry name" value="FAD-dependent thiol oxidase"/>
    <property type="match status" value="1"/>
</dbReference>
<dbReference type="PROSITE" id="PS51324">
    <property type="entry name" value="ERV_ALR"/>
    <property type="match status" value="1"/>
</dbReference>
<organism>
    <name type="scientific">Invertebrate iridescent virus 6</name>
    <name type="common">IIV-6</name>
    <name type="synonym">Chilo iridescent virus</name>
    <dbReference type="NCBI Taxonomy" id="176652"/>
    <lineage>
        <taxon>Viruses</taxon>
        <taxon>Varidnaviria</taxon>
        <taxon>Bamfordvirae</taxon>
        <taxon>Nucleocytoviricota</taxon>
        <taxon>Megaviricetes</taxon>
        <taxon>Pimascovirales</taxon>
        <taxon>Iridoviridae</taxon>
        <taxon>Betairidovirinae</taxon>
        <taxon>Iridovirus</taxon>
    </lineage>
</organism>
<feature type="chain" id="PRO_0000377498" description="Putative FAD-linked sulfhydryl oxidase 347L">
    <location>
        <begin position="1"/>
        <end position="111"/>
    </location>
</feature>
<feature type="domain" description="ERV/ALR sulfhydryl oxidase" evidence="1">
    <location>
        <begin position="2"/>
        <end position="109"/>
    </location>
</feature>
<feature type="disulfide bond" description="Redox-active" evidence="1">
    <location>
        <begin position="49"/>
        <end position="52"/>
    </location>
</feature>
<protein>
    <recommendedName>
        <fullName>Putative FAD-linked sulfhydryl oxidase 347L</fullName>
        <ecNumber>1.8.3.2</ecNumber>
    </recommendedName>
</protein>
<organismHost>
    <name type="scientific">Acheta domesticus</name>
    <name type="common">House cricket</name>
    <dbReference type="NCBI Taxonomy" id="6997"/>
</organismHost>
<organismHost>
    <name type="scientific">Chilo suppressalis</name>
    <name type="common">Asiatic rice borer moth</name>
    <dbReference type="NCBI Taxonomy" id="168631"/>
</organismHost>
<organismHost>
    <name type="scientific">Gryllus bimaculatus</name>
    <name type="common">Two-spotted cricket</name>
    <dbReference type="NCBI Taxonomy" id="6999"/>
</organismHost>
<organismHost>
    <name type="scientific">Gryllus campestris</name>
    <dbReference type="NCBI Taxonomy" id="58607"/>
</organismHost>
<organismHost>
    <name type="scientific">Spodoptera frugiperda</name>
    <name type="common">Fall armyworm</name>
    <dbReference type="NCBI Taxonomy" id="7108"/>
</organismHost>
<proteinExistence type="inferred from homology"/>
<sequence>MTDIDPHIWGPSFWSTYHLYASSYPIHPTPIIMDAARSFVKTIPFTLPCSSCTDHAFAYIKNIQKQDPDLISIVSSKMLFEKFFIDFHNSVNYRLGKPLLPESVARKKWRF</sequence>
<gene>
    <name type="ORF">IIV6-347L</name>
</gene>
<name>VF347_IIV6</name>
<keyword id="KW-1015">Disulfide bond</keyword>
<keyword id="KW-0274">FAD</keyword>
<keyword id="KW-0285">Flavoprotein</keyword>
<keyword id="KW-0560">Oxidoreductase</keyword>
<keyword id="KW-1185">Reference proteome</keyword>